<accession>Q91FI4</accession>
<keyword id="KW-1185">Reference proteome</keyword>
<keyword id="KW-0694">RNA-binding</keyword>
<gene>
    <name type="ORF">IIV6-340R</name>
</gene>
<name>340R_IIV6</name>
<feature type="chain" id="PRO_0000377862" description="DRBM domain-containing protein 340R">
    <location>
        <begin position="1"/>
        <end position="173"/>
    </location>
</feature>
<feature type="domain" description="DRBM" evidence="1">
    <location>
        <begin position="30"/>
        <end position="102"/>
    </location>
</feature>
<proteinExistence type="predicted"/>
<dbReference type="EMBL" id="AF303741">
    <property type="protein sequence ID" value="AAK82201.1"/>
    <property type="molecule type" value="Genomic_DNA"/>
</dbReference>
<dbReference type="RefSeq" id="NP_149803.1">
    <property type="nucleotide sequence ID" value="NC_003038.1"/>
</dbReference>
<dbReference type="KEGG" id="vg:1733063"/>
<dbReference type="OrthoDB" id="28289at10239"/>
<dbReference type="Proteomes" id="UP000001359">
    <property type="component" value="Genome"/>
</dbReference>
<dbReference type="GO" id="GO:0016442">
    <property type="term" value="C:RISC complex"/>
    <property type="evidence" value="ECO:0007669"/>
    <property type="project" value="TreeGrafter"/>
</dbReference>
<dbReference type="GO" id="GO:0070578">
    <property type="term" value="C:RISC-loading complex"/>
    <property type="evidence" value="ECO:0007669"/>
    <property type="project" value="TreeGrafter"/>
</dbReference>
<dbReference type="GO" id="GO:0003725">
    <property type="term" value="F:double-stranded RNA binding"/>
    <property type="evidence" value="ECO:0007669"/>
    <property type="project" value="TreeGrafter"/>
</dbReference>
<dbReference type="GO" id="GO:0035197">
    <property type="term" value="F:siRNA binding"/>
    <property type="evidence" value="ECO:0007669"/>
    <property type="project" value="TreeGrafter"/>
</dbReference>
<dbReference type="GO" id="GO:0070920">
    <property type="term" value="P:regulation of regulatory ncRNA processing"/>
    <property type="evidence" value="ECO:0007669"/>
    <property type="project" value="TreeGrafter"/>
</dbReference>
<dbReference type="GO" id="GO:0030422">
    <property type="term" value="P:siRNA processing"/>
    <property type="evidence" value="ECO:0007669"/>
    <property type="project" value="TreeGrafter"/>
</dbReference>
<dbReference type="Gene3D" id="3.30.160.20">
    <property type="match status" value="1"/>
</dbReference>
<dbReference type="InterPro" id="IPR014720">
    <property type="entry name" value="dsRBD_dom"/>
</dbReference>
<dbReference type="InterPro" id="IPR051247">
    <property type="entry name" value="RLC_Component"/>
</dbReference>
<dbReference type="PANTHER" id="PTHR46205">
    <property type="entry name" value="LOQUACIOUS, ISOFORM B"/>
    <property type="match status" value="1"/>
</dbReference>
<dbReference type="PANTHER" id="PTHR46205:SF3">
    <property type="entry name" value="LOQUACIOUS, ISOFORM B"/>
    <property type="match status" value="1"/>
</dbReference>
<dbReference type="Pfam" id="PF00035">
    <property type="entry name" value="dsrm"/>
    <property type="match status" value="1"/>
</dbReference>
<dbReference type="SMART" id="SM00358">
    <property type="entry name" value="DSRM"/>
    <property type="match status" value="1"/>
</dbReference>
<dbReference type="SUPFAM" id="SSF54768">
    <property type="entry name" value="dsRNA-binding domain-like"/>
    <property type="match status" value="1"/>
</dbReference>
<dbReference type="PROSITE" id="PS50137">
    <property type="entry name" value="DS_RBD"/>
    <property type="match status" value="1"/>
</dbReference>
<sequence>MEKQKDNVTSTKEEILCTKKEQNIDMEKFNSIGFLNEFCHKNKYKPPSYTTLNQNGPDHSPTFNIECRIVDYKPNGKFIGSGLSMKEAKKNAAFKTIKELNLLTLNTENKSSFRVVEIIPYIEKEPHEDEGLLCMWNGDCKKIKITLRKKDGSIQKFKSFLLKIEDSVDIDDI</sequence>
<organism>
    <name type="scientific">Invertebrate iridescent virus 6</name>
    <name type="common">IIV-6</name>
    <name type="synonym">Chilo iridescent virus</name>
    <dbReference type="NCBI Taxonomy" id="176652"/>
    <lineage>
        <taxon>Viruses</taxon>
        <taxon>Varidnaviria</taxon>
        <taxon>Bamfordvirae</taxon>
        <taxon>Nucleocytoviricota</taxon>
        <taxon>Megaviricetes</taxon>
        <taxon>Pimascovirales</taxon>
        <taxon>Iridoviridae</taxon>
        <taxon>Betairidovirinae</taxon>
        <taxon>Iridovirus</taxon>
    </lineage>
</organism>
<reference key="1">
    <citation type="journal article" date="2001" name="Virology">
        <title>Analysis of the first complete DNA sequence of an invertebrate iridovirus: coding strategy of the genome of Chilo iridescent virus.</title>
        <authorList>
            <person name="Jakob N.J."/>
            <person name="Mueller K."/>
            <person name="Bahr U."/>
            <person name="Darai G."/>
        </authorList>
    </citation>
    <scope>NUCLEOTIDE SEQUENCE [LARGE SCALE GENOMIC DNA]</scope>
</reference>
<reference key="2">
    <citation type="journal article" date="2007" name="Virol. J.">
        <title>Comparative genomic analysis of the family Iridoviridae: re-annotating and defining the core set of iridovirus genes.</title>
        <authorList>
            <person name="Eaton H.E."/>
            <person name="Metcalf J."/>
            <person name="Penny E."/>
            <person name="Tcherepanov V."/>
            <person name="Upton C."/>
            <person name="Brunetti C.R."/>
        </authorList>
    </citation>
    <scope>GENOME REANNOTATION</scope>
</reference>
<protein>
    <recommendedName>
        <fullName>DRBM domain-containing protein 340R</fullName>
    </recommendedName>
</protein>
<organismHost>
    <name type="scientific">Acheta domesticus</name>
    <name type="common">House cricket</name>
    <dbReference type="NCBI Taxonomy" id="6997"/>
</organismHost>
<organismHost>
    <name type="scientific">Chilo suppressalis</name>
    <name type="common">Asiatic rice borer moth</name>
    <dbReference type="NCBI Taxonomy" id="168631"/>
</organismHost>
<organismHost>
    <name type="scientific">Gryllus bimaculatus</name>
    <name type="common">Two-spotted cricket</name>
    <dbReference type="NCBI Taxonomy" id="6999"/>
</organismHost>
<organismHost>
    <name type="scientific">Gryllus campestris</name>
    <dbReference type="NCBI Taxonomy" id="58607"/>
</organismHost>
<organismHost>
    <name type="scientific">Spodoptera frugiperda</name>
    <name type="common">Fall armyworm</name>
    <dbReference type="NCBI Taxonomy" id="7108"/>
</organismHost>
<evidence type="ECO:0000255" key="1">
    <source>
        <dbReference type="PROSITE-ProRule" id="PRU00266"/>
    </source>
</evidence>